<evidence type="ECO:0000250" key="1">
    <source>
        <dbReference type="UniProtKB" id="Q9HZZ1"/>
    </source>
</evidence>
<evidence type="ECO:0000269" key="2">
    <source>
    </source>
</evidence>
<evidence type="ECO:0000303" key="3">
    <source>
    </source>
</evidence>
<evidence type="ECO:0000305" key="4"/>
<evidence type="ECO:0000312" key="5">
    <source>
        <dbReference type="EMBL" id="EFV64284.1"/>
    </source>
</evidence>
<evidence type="ECO:0007744" key="6">
    <source>
        <dbReference type="PDB" id="5WXI"/>
    </source>
</evidence>
<evidence type="ECO:0007744" key="7">
    <source>
        <dbReference type="PDB" id="5WXJ"/>
    </source>
</evidence>
<evidence type="ECO:0007744" key="8">
    <source>
        <dbReference type="PDB" id="5WXK"/>
    </source>
</evidence>
<evidence type="ECO:0007744" key="9">
    <source>
        <dbReference type="PDB" id="5XVR"/>
    </source>
</evidence>
<evidence type="ECO:0007829" key="10">
    <source>
        <dbReference type="PDB" id="5WXJ"/>
    </source>
</evidence>
<evidence type="ECO:0007829" key="11">
    <source>
        <dbReference type="PDB" id="5XVR"/>
    </source>
</evidence>
<evidence type="ECO:0007829" key="12">
    <source>
        <dbReference type="PDB" id="7VCH"/>
    </source>
</evidence>
<comment type="function">
    <text evidence="2">Protein-arginine rhamnosyltransferase that catalyzes the transfer of a single rhamnose to elongation factor P (EF-P) on 'Lys-32', a modification required for EF-P-dependent rescue of polyproline stalled ribosomes.</text>
</comment>
<comment type="catalytic activity">
    <reaction evidence="2">
        <text>dTDP-beta-L-rhamnose + L-arginyl-[protein] = N(omega)-(alpha-L-rhamnosyl)-L-arginyl-[protein] + dTDP + H(+)</text>
        <dbReference type="Rhea" id="RHEA:66692"/>
        <dbReference type="Rhea" id="RHEA-COMP:10532"/>
        <dbReference type="Rhea" id="RHEA-COMP:17096"/>
        <dbReference type="ChEBI" id="CHEBI:15378"/>
        <dbReference type="ChEBI" id="CHEBI:29965"/>
        <dbReference type="ChEBI" id="CHEBI:57510"/>
        <dbReference type="ChEBI" id="CHEBI:58369"/>
        <dbReference type="ChEBI" id="CHEBI:167445"/>
    </reaction>
    <physiologicalReaction direction="left-to-right" evidence="2">
        <dbReference type="Rhea" id="RHEA:66693"/>
    </physiologicalReaction>
</comment>
<comment type="domain">
    <text evidence="2">Adopts a GT-B fold and acts as an inverting enzyme that converts the beta-configuration in the dTDP-beta-L-rhamnose donor to the alpha configuration in the N-linked (Rha) arginine product.</text>
</comment>
<comment type="similarity">
    <text evidence="4">Belongs to the glycosyltransferase 104 family.</text>
</comment>
<organism>
    <name type="scientific">Neisseria meningitidis serogroup B / serotype 15 (strain H44/76)</name>
    <dbReference type="NCBI Taxonomy" id="909420"/>
    <lineage>
        <taxon>Bacteria</taxon>
        <taxon>Pseudomonadati</taxon>
        <taxon>Pseudomonadota</taxon>
        <taxon>Betaproteobacteria</taxon>
        <taxon>Neisseriales</taxon>
        <taxon>Neisseriaceae</taxon>
        <taxon>Neisseria</taxon>
    </lineage>
</organism>
<feature type="chain" id="PRO_0000452680" description="Protein-arginine rhamnosyltransferase">
    <location>
        <begin position="1"/>
        <end position="382"/>
    </location>
</feature>
<feature type="active site" description="Proton acceptor" evidence="2">
    <location>
        <position position="20"/>
    </location>
</feature>
<feature type="active site" evidence="1">
    <location>
        <position position="270"/>
    </location>
</feature>
<feature type="binding site" evidence="2 8">
    <location>
        <begin position="18"/>
        <end position="19"/>
    </location>
    <ligand>
        <name>dTDP</name>
        <dbReference type="ChEBI" id="CHEBI:58369"/>
    </ligand>
</feature>
<feature type="binding site" evidence="2 6 9">
    <location>
        <position position="20"/>
    </location>
    <ligand>
        <name>dTDP-beta-L-rhamnose</name>
        <dbReference type="ChEBI" id="CHEBI:57510"/>
    </ligand>
</feature>
<feature type="binding site" evidence="2 8">
    <location>
        <position position="187"/>
    </location>
    <ligand>
        <name>dTDP</name>
        <dbReference type="ChEBI" id="CHEBI:58369"/>
    </ligand>
</feature>
<feature type="binding site" evidence="2 6 9">
    <location>
        <position position="187"/>
    </location>
    <ligand>
        <name>dTDP-beta-L-rhamnose</name>
        <dbReference type="ChEBI" id="CHEBI:57510"/>
    </ligand>
</feature>
<feature type="binding site" evidence="2 8">
    <location>
        <begin position="250"/>
        <end position="252"/>
    </location>
    <ligand>
        <name>dTDP</name>
        <dbReference type="ChEBI" id="CHEBI:58369"/>
    </ligand>
</feature>
<feature type="binding site" evidence="2 6 9">
    <location>
        <begin position="250"/>
        <end position="252"/>
    </location>
    <ligand>
        <name>dTDP-beta-L-rhamnose</name>
        <dbReference type="ChEBI" id="CHEBI:57510"/>
    </ligand>
</feature>
<feature type="binding site" evidence="2 8">
    <location>
        <begin position="268"/>
        <end position="272"/>
    </location>
    <ligand>
        <name>dTDP</name>
        <dbReference type="ChEBI" id="CHEBI:58369"/>
    </ligand>
</feature>
<feature type="binding site" evidence="2 6 9">
    <location>
        <begin position="268"/>
        <end position="272"/>
    </location>
    <ligand>
        <name>dTDP-beta-L-rhamnose</name>
        <dbReference type="ChEBI" id="CHEBI:57510"/>
    </ligand>
</feature>
<feature type="mutagenesis site" description="Strongly reduced protein-arginine rhamnosyltransferase activity." evidence="2">
    <original>D</original>
    <variation>A</variation>
    <location>
        <position position="16"/>
    </location>
</feature>
<feature type="mutagenesis site" description="Does not affect protein-arginine rhamnosyltransferase activity." evidence="2">
    <original>D</original>
    <variation>N</variation>
    <location>
        <position position="16"/>
    </location>
</feature>
<feature type="mutagenesis site" description="Abolished protein-arginine rhamnosyltransferase activity." evidence="2">
    <original>D</original>
    <variation>A</variation>
    <variation>N</variation>
    <location>
        <position position="20"/>
    </location>
</feature>
<feature type="mutagenesis site" description="Abolished protein-arginine rhamnosyltransferase activity." evidence="2">
    <original>E</original>
    <variation>A</variation>
    <location>
        <position position="89"/>
    </location>
</feature>
<feature type="mutagenesis site" description="Does not affect protein-arginine rhamnosyltransferase activity." evidence="2">
    <original>N</original>
    <variation>A</variation>
    <location>
        <position position="112"/>
    </location>
</feature>
<feature type="mutagenesis site" description="Abolished protein-arginine rhamnosyltransferase activity." evidence="2">
    <original>E</original>
    <variation>A</variation>
    <location>
        <position position="114"/>
    </location>
</feature>
<feature type="mutagenesis site" description="Strongly reduced protein-arginine rhamnosyltransferase activity." evidence="2">
    <original>Y</original>
    <variation>A</variation>
    <location>
        <position position="288"/>
    </location>
</feature>
<feature type="strand" evidence="11">
    <location>
        <begin position="7"/>
        <end position="12"/>
    </location>
</feature>
<feature type="turn" evidence="11">
    <location>
        <begin position="16"/>
        <end position="18"/>
    </location>
</feature>
<feature type="helix" evidence="11">
    <location>
        <begin position="21"/>
        <end position="35"/>
    </location>
</feature>
<feature type="strand" evidence="11">
    <location>
        <begin position="38"/>
        <end position="44"/>
    </location>
</feature>
<feature type="helix" evidence="11">
    <location>
        <begin position="46"/>
        <end position="52"/>
    </location>
</feature>
<feature type="strand" evidence="11">
    <location>
        <begin position="58"/>
        <end position="63"/>
    </location>
</feature>
<feature type="strand" evidence="11">
    <location>
        <begin position="66"/>
        <end position="72"/>
    </location>
</feature>
<feature type="strand" evidence="11">
    <location>
        <begin position="85"/>
        <end position="89"/>
    </location>
</feature>
<feature type="strand" evidence="10">
    <location>
        <begin position="91"/>
        <end position="93"/>
    </location>
</feature>
<feature type="helix" evidence="11">
    <location>
        <begin position="97"/>
        <end position="106"/>
    </location>
</feature>
<feature type="strand" evidence="11">
    <location>
        <begin position="109"/>
        <end position="113"/>
    </location>
</feature>
<feature type="helix" evidence="11">
    <location>
        <begin position="120"/>
        <end position="125"/>
    </location>
</feature>
<feature type="strand" evidence="11">
    <location>
        <begin position="129"/>
        <end position="132"/>
    </location>
</feature>
<feature type="strand" evidence="11">
    <location>
        <begin position="135"/>
        <end position="140"/>
    </location>
</feature>
<feature type="turn" evidence="12">
    <location>
        <begin position="146"/>
        <end position="149"/>
    </location>
</feature>
<feature type="helix" evidence="11">
    <location>
        <begin position="157"/>
        <end position="160"/>
    </location>
</feature>
<feature type="helix" evidence="11">
    <location>
        <begin position="165"/>
        <end position="171"/>
    </location>
</feature>
<feature type="strand" evidence="11">
    <location>
        <begin position="179"/>
        <end position="184"/>
    </location>
</feature>
<feature type="helix" evidence="11">
    <location>
        <begin position="191"/>
        <end position="202"/>
    </location>
</feature>
<feature type="strand" evidence="11">
    <location>
        <begin position="206"/>
        <end position="210"/>
    </location>
</feature>
<feature type="helix" evidence="11">
    <location>
        <begin position="214"/>
        <end position="221"/>
    </location>
</feature>
<feature type="turn" evidence="11">
    <location>
        <begin position="227"/>
        <end position="230"/>
    </location>
</feature>
<feature type="strand" evidence="11">
    <location>
        <begin position="236"/>
        <end position="239"/>
    </location>
</feature>
<feature type="strand" evidence="11">
    <location>
        <begin position="242"/>
        <end position="246"/>
    </location>
</feature>
<feature type="helix" evidence="11">
    <location>
        <begin position="252"/>
        <end position="254"/>
    </location>
</feature>
<feature type="helix" evidence="11">
    <location>
        <begin position="255"/>
        <end position="261"/>
    </location>
</feature>
<feature type="strand" evidence="11">
    <location>
        <begin position="262"/>
        <end position="268"/>
    </location>
</feature>
<feature type="helix" evidence="11">
    <location>
        <begin position="271"/>
        <end position="279"/>
    </location>
</feature>
<feature type="strand" evidence="11">
    <location>
        <begin position="283"/>
        <end position="286"/>
    </location>
</feature>
<feature type="helix" evidence="11">
    <location>
        <begin position="291"/>
        <end position="295"/>
    </location>
</feature>
<feature type="helix" evidence="11">
    <location>
        <begin position="296"/>
        <end position="306"/>
    </location>
</feature>
<feature type="helix" evidence="11">
    <location>
        <begin position="307"/>
        <end position="309"/>
    </location>
</feature>
<feature type="helix" evidence="11">
    <location>
        <begin position="312"/>
        <end position="325"/>
    </location>
</feature>
<feature type="helix" evidence="11">
    <location>
        <begin position="333"/>
        <end position="345"/>
    </location>
</feature>
<feature type="helix" evidence="11">
    <location>
        <begin position="347"/>
        <end position="362"/>
    </location>
</feature>
<feature type="helix" evidence="11">
    <location>
        <begin position="367"/>
        <end position="377"/>
    </location>
</feature>
<protein>
    <recommendedName>
        <fullName evidence="4">Protein-arginine rhamnosyltransferase</fullName>
        <ecNumber evidence="2">2.4.1.-</ecNumber>
    </recommendedName>
    <alternativeName>
        <fullName evidence="3">EF-P arginine rhamnosyltransferase</fullName>
    </alternativeName>
</protein>
<sequence length="382" mass="44166">MNTPPFVCWIFCKVIDNFGDIGVSWRLARVLHRELGWQVHLWTDDVSALRALCPDLPDVPCVHQDIHVRTWHSDAADIDTAPVPDVVIETFACDLPENVLHIIRRHKPLWLNWEYLSAEESNERLHLMPSPQEGVQKYFWFMGFSEKSGGLIRERDYCEAVRFDTEALRERLMLPEKNASEWLLFGYRSDVWAKWLEMWRQAGSPMTLLLAGTQIIDSLKQSGVIPQDALQNDGDVFQTASVRLVKIPFVPQQDFDQLLHLADCAVIRGEDSFVRAQLAGKPFFWHIYPQDENVHLDKLHAFWDKAHGFYTPETVSAHRRLSDDLNGGEALSATQRLECWQTLQQHQNGWRQGAEDWSRYLFGQPSAPEKLAAFVSKHQKIR</sequence>
<keyword id="KW-0002">3D-structure</keyword>
<keyword id="KW-0328">Glycosyltransferase</keyword>
<keyword id="KW-0808">Transferase</keyword>
<reference key="1">
    <citation type="journal article" date="2011" name="J. Bacteriol.">
        <title>Genome sequence of Neisseria meningitidis serogroup B strain H44/76.</title>
        <authorList>
            <person name="Piet J.R."/>
            <person name="Huis In 't Veld R.A."/>
            <person name="van Schaik B.D."/>
            <person name="van Kampen A.H."/>
            <person name="Baas F."/>
            <person name="van de Beek D."/>
            <person name="Pannekoek Y."/>
            <person name="van der Ende A."/>
        </authorList>
    </citation>
    <scope>NUCLEOTIDE SEQUENCE [LARGE SCALE GENOMIC DNA]</scope>
    <source>
        <strain>H44/76</strain>
    </source>
</reference>
<reference evidence="6 7 8 9" key="2">
    <citation type="journal article" date="2018" name="Nat. Chem. Biol.">
        <title>Structural basis of protein arginine rhamnosylation by glycosyltransferase EarP.</title>
        <authorList>
            <person name="Sengoku T."/>
            <person name="Suzuki T."/>
            <person name="Dohmae N."/>
            <person name="Watanabe C."/>
            <person name="Honma T."/>
            <person name="Hikida Y."/>
            <person name="Yamaguchi Y."/>
            <person name="Takahashi H."/>
            <person name="Yokoyama S."/>
            <person name="Yanagisawa T."/>
        </authorList>
    </citation>
    <scope>X-RAY CRYSTALLOGRAPHY (1.63 ANGSTROMS) IN COMPLEX WITH DTDP-BETA-L-RHAMNOSE; DTDP AND EFP</scope>
    <scope>FUNCTION</scope>
    <scope>CATALYTIC ACTIVITY</scope>
    <scope>ACTIVE SITE</scope>
    <scope>DOMAIN</scope>
    <scope>MUTAGENESIS OF ASP-16; ASP-20; GLU-89; ASN-112; GLU-114 AND TYR-288</scope>
    <source>
        <strain>H44/76</strain>
    </source>
</reference>
<gene>
    <name evidence="3" type="primary">earP</name>
    <name evidence="5" type="ORF">NMH_0797</name>
</gene>
<dbReference type="EC" id="2.4.1.-" evidence="2"/>
<dbReference type="EMBL" id="AEQZ01000013">
    <property type="protein sequence ID" value="EFV64284.1"/>
    <property type="molecule type" value="Genomic_DNA"/>
</dbReference>
<dbReference type="RefSeq" id="WP_002225328.1">
    <property type="nucleotide sequence ID" value="NZ_AEQZ01000013.1"/>
</dbReference>
<dbReference type="PDB" id="5WXI">
    <property type="method" value="X-ray"/>
    <property type="resolution" value="2.00 A"/>
    <property type="chains" value="A/B=1-382"/>
</dbReference>
<dbReference type="PDB" id="5WXJ">
    <property type="method" value="X-ray"/>
    <property type="resolution" value="1.85 A"/>
    <property type="chains" value="A/B=1-382"/>
</dbReference>
<dbReference type="PDB" id="5WXK">
    <property type="method" value="X-ray"/>
    <property type="resolution" value="1.80 A"/>
    <property type="chains" value="A=1-382"/>
</dbReference>
<dbReference type="PDB" id="5XVR">
    <property type="method" value="X-ray"/>
    <property type="resolution" value="1.63 A"/>
    <property type="chains" value="A/B=1-382"/>
</dbReference>
<dbReference type="PDB" id="7VCH">
    <property type="method" value="X-ray"/>
    <property type="resolution" value="2.85 A"/>
    <property type="chains" value="A/F=1-382"/>
</dbReference>
<dbReference type="PDBsum" id="5WXI"/>
<dbReference type="PDBsum" id="5WXJ"/>
<dbReference type="PDBsum" id="5WXK"/>
<dbReference type="PDBsum" id="5XVR"/>
<dbReference type="PDBsum" id="7VCH"/>
<dbReference type="SMR" id="E6MVV9"/>
<dbReference type="KEGG" id="nmh:NMBH4476_1235"/>
<dbReference type="PATRIC" id="fig|909420.3.peg.1694"/>
<dbReference type="Proteomes" id="UP000032707">
    <property type="component" value="Unassembled WGS sequence"/>
</dbReference>
<dbReference type="GO" id="GO:0106361">
    <property type="term" value="F:protein-arginine rhamnosyltransferase activity"/>
    <property type="evidence" value="ECO:0000314"/>
    <property type="project" value="UniProtKB"/>
</dbReference>
<dbReference type="InterPro" id="IPR016633">
    <property type="entry name" value="EarP"/>
</dbReference>
<dbReference type="NCBIfam" id="TIGR03837">
    <property type="entry name" value="efp_Arg_rhamno"/>
    <property type="match status" value="1"/>
</dbReference>
<dbReference type="Pfam" id="PF10093">
    <property type="entry name" value="EarP"/>
    <property type="match status" value="1"/>
</dbReference>
<dbReference type="PIRSF" id="PIRSF015557">
    <property type="entry name" value="UCP015557"/>
    <property type="match status" value="1"/>
</dbReference>
<proteinExistence type="evidence at protein level"/>
<name>EARP_NEIMH</name>
<accession>E6MVV9</accession>